<name>H2AC1_CYRHA</name>
<accession>D2Y2K4</accession>
<reference key="1">
    <citation type="journal article" date="2010" name="J. Proteome Res.">
        <title>Molecular diversification of peptide toxins from the tarantula Haplopelma hainanum (Ornithoctonus hainana) venom based on transcriptomic, peptidomic, and genomic analyses.</title>
        <authorList>
            <person name="Tang X."/>
            <person name="Zhang Y."/>
            <person name="Hu W."/>
            <person name="Xu D."/>
            <person name="Tao H."/>
            <person name="Yang X."/>
            <person name="Li Y."/>
            <person name="Jiang L."/>
            <person name="Liang S."/>
        </authorList>
    </citation>
    <scope>NUCLEOTIDE SEQUENCE [LARGE SCALE GENOMIC DNA]</scope>
    <source>
        <tissue>Venom gland</tissue>
    </source>
</reference>
<proteinExistence type="inferred from homology"/>
<feature type="signal peptide" evidence="2">
    <location>
        <begin position="1"/>
        <end position="22"/>
    </location>
</feature>
<feature type="propeptide" id="PRO_0000400825" evidence="1">
    <location>
        <begin position="23"/>
        <end position="48"/>
    </location>
</feature>
<feature type="peptide" id="PRO_0000400826" description="U4-theraphotoxin-Hhn1u">
    <location>
        <begin position="49"/>
        <end position="85"/>
    </location>
</feature>
<feature type="disulfide bond" evidence="1">
    <location>
        <begin position="52"/>
        <end position="66"/>
    </location>
</feature>
<feature type="disulfide bond" evidence="1">
    <location>
        <begin position="56"/>
        <end position="77"/>
    </location>
</feature>
<feature type="disulfide bond" evidence="1">
    <location>
        <begin position="71"/>
        <end position="82"/>
    </location>
</feature>
<comment type="function">
    <text evidence="1">Postsynaptic neurotoxin.</text>
</comment>
<comment type="subcellular location">
    <subcellularLocation>
        <location evidence="1">Secreted</location>
    </subcellularLocation>
</comment>
<comment type="tissue specificity">
    <text>Expressed by the venom gland.</text>
</comment>
<comment type="similarity">
    <text evidence="3">Belongs to the neurotoxin 12 (Hwtx-2) family. 02 (Hwtx-2) subfamily.</text>
</comment>
<sequence length="85" mass="9489">MKMTLIAILTCAAVLVLHTTAAEELEAESQLMEVGMPDTELEAVDEERLFECSVSCEIEKEGNKDCKKKKCKGGWKCKFNMCVEV</sequence>
<keyword id="KW-1015">Disulfide bond</keyword>
<keyword id="KW-0528">Neurotoxin</keyword>
<keyword id="KW-0629">Postsynaptic neurotoxin</keyword>
<keyword id="KW-0964">Secreted</keyword>
<keyword id="KW-0732">Signal</keyword>
<keyword id="KW-0800">Toxin</keyword>
<organism>
    <name type="scientific">Cyriopagopus hainanus</name>
    <name type="common">Chinese bird spider</name>
    <name type="synonym">Haplopelma hainanum</name>
    <dbReference type="NCBI Taxonomy" id="209901"/>
    <lineage>
        <taxon>Eukaryota</taxon>
        <taxon>Metazoa</taxon>
        <taxon>Ecdysozoa</taxon>
        <taxon>Arthropoda</taxon>
        <taxon>Chelicerata</taxon>
        <taxon>Arachnida</taxon>
        <taxon>Araneae</taxon>
        <taxon>Mygalomorphae</taxon>
        <taxon>Theraphosidae</taxon>
        <taxon>Haplopelma</taxon>
    </lineage>
</organism>
<dbReference type="EMBL" id="GU293081">
    <property type="protein sequence ID" value="ADB56897.1"/>
    <property type="molecule type" value="Genomic_DNA"/>
</dbReference>
<dbReference type="SMR" id="D2Y2K4"/>
<dbReference type="ArachnoServer" id="AS001861">
    <property type="toxin name" value="U4-theraphotoxin-Hhn1u"/>
</dbReference>
<dbReference type="GO" id="GO:0005576">
    <property type="term" value="C:extracellular region"/>
    <property type="evidence" value="ECO:0007669"/>
    <property type="project" value="UniProtKB-SubCell"/>
</dbReference>
<dbReference type="GO" id="GO:0035792">
    <property type="term" value="C:host cell postsynaptic membrane"/>
    <property type="evidence" value="ECO:0007669"/>
    <property type="project" value="UniProtKB-KW"/>
</dbReference>
<dbReference type="GO" id="GO:0090729">
    <property type="term" value="F:toxin activity"/>
    <property type="evidence" value="ECO:0007669"/>
    <property type="project" value="UniProtKB-KW"/>
</dbReference>
<dbReference type="InterPro" id="IPR012625">
    <property type="entry name" value="Hwtx-2-like"/>
</dbReference>
<dbReference type="Pfam" id="PF08089">
    <property type="entry name" value="Toxin_20"/>
    <property type="match status" value="1"/>
</dbReference>
<dbReference type="SUPFAM" id="SSF57059">
    <property type="entry name" value="omega toxin-like"/>
    <property type="match status" value="1"/>
</dbReference>
<dbReference type="PROSITE" id="PS60022">
    <property type="entry name" value="HWTX_2"/>
    <property type="match status" value="1"/>
</dbReference>
<evidence type="ECO:0000250" key="1"/>
<evidence type="ECO:0000255" key="2"/>
<evidence type="ECO:0000305" key="3"/>
<protein>
    <recommendedName>
        <fullName>U4-theraphotoxin-Hhn1u</fullName>
        <shortName>U4-TRTX-Hhn1u</shortName>
    </recommendedName>
    <alternativeName>
        <fullName>Hainantoxin-II-29</fullName>
        <shortName>HNTX-II-29</shortName>
    </alternativeName>
</protein>